<name>GRDH_PEPAC</name>
<dbReference type="EC" id="1.21.4.4"/>
<dbReference type="EMBL" id="Y17145">
    <property type="protein sequence ID" value="CAA76651.1"/>
    <property type="molecule type" value="Genomic_DNA"/>
</dbReference>
<dbReference type="PIR" id="S63506">
    <property type="entry name" value="S63506"/>
</dbReference>
<dbReference type="GO" id="GO:0033795">
    <property type="term" value="F:betaine reductase activity"/>
    <property type="evidence" value="ECO:0007669"/>
    <property type="project" value="UniProtKB-EC"/>
</dbReference>
<dbReference type="InterPro" id="IPR053589">
    <property type="entry name" value="Betaine_reductase_B_beta"/>
</dbReference>
<dbReference type="InterPro" id="IPR010187">
    <property type="entry name" value="Various_sel_PB"/>
</dbReference>
<dbReference type="NCBIfam" id="NF040795">
    <property type="entry name" value="betaine_GrdH"/>
    <property type="match status" value="1"/>
</dbReference>
<dbReference type="NCBIfam" id="TIGR01918">
    <property type="entry name" value="various_sel_PB"/>
    <property type="match status" value="1"/>
</dbReference>
<dbReference type="Pfam" id="PF07355">
    <property type="entry name" value="GRDB"/>
    <property type="match status" value="1"/>
</dbReference>
<sequence length="437" mass="47613">MKKAILYLNQFFGQVGGEDKADYEPEIINGQVGAAMMLNGVLEGAEVTHTIICGDNFMGTYKDEAVSRIMGFLEDKEFDIFLAGPAFQAGRYGVACGEICKVVKEKYNVPVVTSMHVENPGVQMFKKDMYVMIGGNNAGRMRQDMSAMAKVANKIIAGEKIGPADEEGFFPRGKRHQHWREDGKPASERVVDMLLKKLSGEEFQTELPIPKSDRVEIAAPIKDLSKATIAVVTTGGIVPVDNPDRIQSASATRWGMYDVTGLERLEGGVYKTIHAGFDPAAADADPNVIVPLDALRAYEKEGKIGKVHEYFYSTVGTGTTEAEAARMAKEIVVKLKQGGVDGVIMTSTUGTCTRCGATMVKEIERAGFPIVQMCNLIPVASTVGANKIVPTISIPYPLGDPSTSKEQQWKLRYHRVGTALDALTVDVQEQTIFKVKI</sequence>
<reference key="1">
    <citation type="submission" date="1998-04" db="EMBL/GenBank/DDBJ databases">
        <authorList>
            <person name="Sonntag D."/>
            <person name="Soehling B."/>
            <person name="Andreesen J.R."/>
        </authorList>
    </citation>
    <scope>NUCLEOTIDE SEQUENCE [GENOMIC DNA]</scope>
    <source>
        <strain>ATCC 49065 / DSM 3953 / al-2</strain>
    </source>
</reference>
<reference key="2">
    <citation type="journal article" date="1995" name="Eur. J. Biochem.">
        <title>Purification and characterization of protein PB of betaine reductase and its relationship to the corresponding proteins glycine reductase and sarcosine reductase from Eubacterium acidaminophilum.</title>
        <authorList>
            <person name="Meyer M."/>
            <person name="Granderath K."/>
            <person name="Andreesen J.R."/>
        </authorList>
    </citation>
    <scope>PROTEIN SEQUENCE OF 1-40</scope>
    <scope>CHARACTERIZATION</scope>
    <source>
        <strain>ATCC 49065 / DSM 3953 / al-2</strain>
    </source>
</reference>
<proteinExistence type="evidence at protein level"/>
<evidence type="ECO:0000305" key="1"/>
<protein>
    <recommendedName>
        <fullName>Betaine reductase complex component B subunit beta</fullName>
        <ecNumber>1.21.4.4</ecNumber>
    </recommendedName>
    <alternativeName>
        <fullName>Selenoprotein PB beta</fullName>
    </alternativeName>
</protein>
<accession>O69407</accession>
<accession>Q9R4H0</accession>
<feature type="chain" id="PRO_0000083844" description="Betaine reductase complex component B subunit beta">
    <location>
        <begin position="1"/>
        <end position="437"/>
    </location>
</feature>
<feature type="active site">
    <location>
        <position position="349"/>
    </location>
</feature>
<feature type="non-standard amino acid" description="Selenocysteine">
    <location>
        <position position="349"/>
    </location>
</feature>
<comment type="function">
    <text>In the first step of betaine reductase, the substrate is bound to component PB via a Schiff base intermediate. Then the PB-activated substrate is nucleophilically attacked by the selenol anion of component PA to transform it to a carboxymethylated selenoether and the respective amine. By action of component PC, acetyl phosphate is formed, leaving component PA in its oxidized state. Finally component PA becomes reduced by the thioredoxin system to start a new catalytic cycle of reductive deamination.</text>
</comment>
<comment type="catalytic activity">
    <reaction>
        <text>acetyl phosphate + trimethylamine + [thioredoxin]-disulfide + H2O = glycine betaine + [thioredoxin]-dithiol + phosphate + H(+)</text>
        <dbReference type="Rhea" id="RHEA:11848"/>
        <dbReference type="Rhea" id="RHEA-COMP:10698"/>
        <dbReference type="Rhea" id="RHEA-COMP:10700"/>
        <dbReference type="ChEBI" id="CHEBI:15377"/>
        <dbReference type="ChEBI" id="CHEBI:15378"/>
        <dbReference type="ChEBI" id="CHEBI:17750"/>
        <dbReference type="ChEBI" id="CHEBI:22191"/>
        <dbReference type="ChEBI" id="CHEBI:29950"/>
        <dbReference type="ChEBI" id="CHEBI:43474"/>
        <dbReference type="ChEBI" id="CHEBI:50058"/>
        <dbReference type="ChEBI" id="CHEBI:58389"/>
        <dbReference type="EC" id="1.21.4.4"/>
    </reaction>
</comment>
<comment type="subunit">
    <text>Heterotetramer of two alpha and two beta subunits. Component of the betaine reductase complex, together with components A and C. PB is substrate specific.</text>
</comment>
<comment type="similarity">
    <text evidence="1">Belongs to the GrdB/GrdF/GrdH family.</text>
</comment>
<gene>
    <name type="primary">grdH</name>
</gene>
<keyword id="KW-0903">Direct protein sequencing</keyword>
<keyword id="KW-0560">Oxidoreductase</keyword>
<keyword id="KW-0712">Selenocysteine</keyword>
<organism>
    <name type="scientific">Peptoclostridium acidaminophilum</name>
    <name type="common">Eubacterium acidaminophilum</name>
    <dbReference type="NCBI Taxonomy" id="1731"/>
    <lineage>
        <taxon>Bacteria</taxon>
        <taxon>Bacillati</taxon>
        <taxon>Bacillota</taxon>
        <taxon>Clostridia</taxon>
        <taxon>Peptostreptococcales</taxon>
        <taxon>Peptoclostridiaceae</taxon>
        <taxon>Peptoclostridium</taxon>
    </lineage>
</organism>